<evidence type="ECO:0000250" key="1"/>
<evidence type="ECO:0000255" key="2">
    <source>
        <dbReference type="HAMAP-Rule" id="MF_00492"/>
    </source>
</evidence>
<organism>
    <name type="scientific">Actinobacillus pleuropneumoniae serotype 7 (strain AP76)</name>
    <dbReference type="NCBI Taxonomy" id="537457"/>
    <lineage>
        <taxon>Bacteria</taxon>
        <taxon>Pseudomonadati</taxon>
        <taxon>Pseudomonadota</taxon>
        <taxon>Gammaproteobacteria</taxon>
        <taxon>Pasteurellales</taxon>
        <taxon>Pasteurellaceae</taxon>
        <taxon>Actinobacillus</taxon>
    </lineage>
</organism>
<reference key="1">
    <citation type="submission" date="2008-06" db="EMBL/GenBank/DDBJ databases">
        <title>Genome and proteome analysis of A. pleuropneumoniae serotype 7.</title>
        <authorList>
            <person name="Linke B."/>
            <person name="Buettner F."/>
            <person name="Martinez-Arias R."/>
            <person name="Goesmann A."/>
            <person name="Baltes N."/>
            <person name="Tegetmeyer H."/>
            <person name="Singh M."/>
            <person name="Gerlach G.F."/>
        </authorList>
    </citation>
    <scope>NUCLEOTIDE SEQUENCE [LARGE SCALE GENOMIC DNA]</scope>
    <source>
        <strain>AP76</strain>
    </source>
</reference>
<gene>
    <name evidence="2" type="primary">tal</name>
    <name type="ordered locus">APP7_0062</name>
</gene>
<sequence length="315" mass="34824">MSQLDALREMTVVVADTGDIEAIKQYQPQDATTNPSLILSASALPQYASLIDDAVAYAKARSDDKAQQLIDAEDKLAVNIGLEILKIVPGRISTEVDARLSYDTKATIEKARQIMKLYNDAGISNDRILIKIASTWQGIRAAEVLEKEGINCNLTLLFSQAQARACAEAGVYLISPFVGRILDWYKAAEKKEYAPAEDPGVISVTNIYNYYKQYGYQTVVMGASFRNVGEITEIAGCDRLTIAPPLLKELAESNAPLVRKLEYKGEVKTRPAPLTEAEFYWQHNQDPMAIEKLAEGIRKFAVDIEKLEAMLAAKL</sequence>
<proteinExistence type="inferred from homology"/>
<dbReference type="EC" id="2.2.1.2" evidence="2"/>
<dbReference type="EMBL" id="CP001091">
    <property type="protein sequence ID" value="ACE60714.1"/>
    <property type="molecule type" value="Genomic_DNA"/>
</dbReference>
<dbReference type="RefSeq" id="WP_005616549.1">
    <property type="nucleotide sequence ID" value="NC_010939.1"/>
</dbReference>
<dbReference type="SMR" id="B3GZQ2"/>
<dbReference type="KEGG" id="apa:APP7_0062"/>
<dbReference type="HOGENOM" id="CLU_047470_0_1_6"/>
<dbReference type="UniPathway" id="UPA00115">
    <property type="reaction ID" value="UER00414"/>
</dbReference>
<dbReference type="Proteomes" id="UP000001226">
    <property type="component" value="Chromosome"/>
</dbReference>
<dbReference type="GO" id="GO:0005829">
    <property type="term" value="C:cytosol"/>
    <property type="evidence" value="ECO:0007669"/>
    <property type="project" value="TreeGrafter"/>
</dbReference>
<dbReference type="GO" id="GO:0004801">
    <property type="term" value="F:transaldolase activity"/>
    <property type="evidence" value="ECO:0000250"/>
    <property type="project" value="UniProtKB"/>
</dbReference>
<dbReference type="GO" id="GO:0005975">
    <property type="term" value="P:carbohydrate metabolic process"/>
    <property type="evidence" value="ECO:0007669"/>
    <property type="project" value="InterPro"/>
</dbReference>
<dbReference type="GO" id="GO:0006098">
    <property type="term" value="P:pentose-phosphate shunt"/>
    <property type="evidence" value="ECO:0007669"/>
    <property type="project" value="UniProtKB-UniRule"/>
</dbReference>
<dbReference type="CDD" id="cd00957">
    <property type="entry name" value="Transaldolase_TalAB"/>
    <property type="match status" value="1"/>
</dbReference>
<dbReference type="FunFam" id="3.20.20.70:FF:000002">
    <property type="entry name" value="Transaldolase"/>
    <property type="match status" value="1"/>
</dbReference>
<dbReference type="Gene3D" id="3.20.20.70">
    <property type="entry name" value="Aldolase class I"/>
    <property type="match status" value="1"/>
</dbReference>
<dbReference type="HAMAP" id="MF_00492">
    <property type="entry name" value="Transaldolase_1"/>
    <property type="match status" value="1"/>
</dbReference>
<dbReference type="InterPro" id="IPR013785">
    <property type="entry name" value="Aldolase_TIM"/>
</dbReference>
<dbReference type="InterPro" id="IPR001585">
    <property type="entry name" value="TAL/FSA"/>
</dbReference>
<dbReference type="InterPro" id="IPR004730">
    <property type="entry name" value="Transaldolase_1"/>
</dbReference>
<dbReference type="InterPro" id="IPR018225">
    <property type="entry name" value="Transaldolase_AS"/>
</dbReference>
<dbReference type="NCBIfam" id="NF009001">
    <property type="entry name" value="PRK12346.1"/>
    <property type="match status" value="1"/>
</dbReference>
<dbReference type="NCBIfam" id="TIGR00874">
    <property type="entry name" value="talAB"/>
    <property type="match status" value="1"/>
</dbReference>
<dbReference type="PANTHER" id="PTHR10683">
    <property type="entry name" value="TRANSALDOLASE"/>
    <property type="match status" value="1"/>
</dbReference>
<dbReference type="PANTHER" id="PTHR10683:SF18">
    <property type="entry name" value="TRANSALDOLASE"/>
    <property type="match status" value="1"/>
</dbReference>
<dbReference type="Pfam" id="PF00923">
    <property type="entry name" value="TAL_FSA"/>
    <property type="match status" value="1"/>
</dbReference>
<dbReference type="SUPFAM" id="SSF51569">
    <property type="entry name" value="Aldolase"/>
    <property type="match status" value="1"/>
</dbReference>
<dbReference type="PROSITE" id="PS01054">
    <property type="entry name" value="TRANSALDOLASE_1"/>
    <property type="match status" value="1"/>
</dbReference>
<dbReference type="PROSITE" id="PS00958">
    <property type="entry name" value="TRANSALDOLASE_2"/>
    <property type="match status" value="1"/>
</dbReference>
<keyword id="KW-0963">Cytoplasm</keyword>
<keyword id="KW-0570">Pentose shunt</keyword>
<keyword id="KW-0704">Schiff base</keyword>
<keyword id="KW-0808">Transferase</keyword>
<protein>
    <recommendedName>
        <fullName evidence="2">Transaldolase</fullName>
        <ecNumber evidence="2">2.2.1.2</ecNumber>
    </recommendedName>
</protein>
<comment type="function">
    <text evidence="2">Transaldolase is important for the balance of metabolites in the pentose-phosphate pathway.</text>
</comment>
<comment type="catalytic activity">
    <reaction evidence="2">
        <text>D-sedoheptulose 7-phosphate + D-glyceraldehyde 3-phosphate = D-erythrose 4-phosphate + beta-D-fructose 6-phosphate</text>
        <dbReference type="Rhea" id="RHEA:17053"/>
        <dbReference type="ChEBI" id="CHEBI:16897"/>
        <dbReference type="ChEBI" id="CHEBI:57483"/>
        <dbReference type="ChEBI" id="CHEBI:57634"/>
        <dbReference type="ChEBI" id="CHEBI:59776"/>
        <dbReference type="EC" id="2.2.1.2"/>
    </reaction>
</comment>
<comment type="pathway">
    <text evidence="2">Carbohydrate degradation; pentose phosphate pathway; D-glyceraldehyde 3-phosphate and beta-D-fructose 6-phosphate from D-ribose 5-phosphate and D-xylulose 5-phosphate (non-oxidative stage): step 2/3.</text>
</comment>
<comment type="subunit">
    <text evidence="1">Homodimer.</text>
</comment>
<comment type="subcellular location">
    <subcellularLocation>
        <location evidence="2">Cytoplasm</location>
    </subcellularLocation>
</comment>
<comment type="similarity">
    <text evidence="2">Belongs to the transaldolase family. Type 1 subfamily.</text>
</comment>
<feature type="chain" id="PRO_1000126232" description="Transaldolase">
    <location>
        <begin position="1"/>
        <end position="315"/>
    </location>
</feature>
<feature type="active site" description="Schiff-base intermediate with substrate" evidence="2">
    <location>
        <position position="131"/>
    </location>
</feature>
<accession>B3GZQ2</accession>
<name>TAL_ACTP7</name>